<evidence type="ECO:0000250" key="1">
    <source>
        <dbReference type="UniProtKB" id="P53867"/>
    </source>
</evidence>
<evidence type="ECO:0000250" key="2">
    <source>
        <dbReference type="UniProtKB" id="Q9Y4P1"/>
    </source>
</evidence>
<evidence type="ECO:0000256" key="3">
    <source>
        <dbReference type="SAM" id="MobiDB-lite"/>
    </source>
</evidence>
<evidence type="ECO:0000305" key="4"/>
<name>ATG4_NEUCR</name>
<accession>Q7S3X7</accession>
<organism>
    <name type="scientific">Neurospora crassa (strain ATCC 24698 / 74-OR23-1A / CBS 708.71 / DSM 1257 / FGSC 987)</name>
    <dbReference type="NCBI Taxonomy" id="367110"/>
    <lineage>
        <taxon>Eukaryota</taxon>
        <taxon>Fungi</taxon>
        <taxon>Dikarya</taxon>
        <taxon>Ascomycota</taxon>
        <taxon>Pezizomycotina</taxon>
        <taxon>Sordariomycetes</taxon>
        <taxon>Sordariomycetidae</taxon>
        <taxon>Sordariales</taxon>
        <taxon>Sordariaceae</taxon>
        <taxon>Neurospora</taxon>
    </lineage>
</organism>
<protein>
    <recommendedName>
        <fullName>Cysteine protease 1</fullName>
        <ecNumber>3.4.22.-</ecNumber>
    </recommendedName>
    <alternativeName>
        <fullName>Autophagy-related protein 4</fullName>
    </alternativeName>
</protein>
<dbReference type="EC" id="3.4.22.-"/>
<dbReference type="EMBL" id="CM002242">
    <property type="protein sequence ID" value="EAA30202.1"/>
    <property type="molecule type" value="Genomic_DNA"/>
</dbReference>
<dbReference type="RefSeq" id="XP_959438.1">
    <property type="nucleotide sequence ID" value="XM_954345.2"/>
</dbReference>
<dbReference type="SMR" id="Q7S3X7"/>
<dbReference type="FunCoup" id="Q7S3X7">
    <property type="interactions" value="292"/>
</dbReference>
<dbReference type="STRING" id="367110.Q7S3X7"/>
<dbReference type="MEROPS" id="C54.001"/>
<dbReference type="PaxDb" id="5141-EFNCRP00000003085"/>
<dbReference type="EnsemblFungi" id="EAA30202">
    <property type="protein sequence ID" value="EAA30202"/>
    <property type="gene ID" value="NCU02433"/>
</dbReference>
<dbReference type="GeneID" id="3875585"/>
<dbReference type="KEGG" id="ncr:NCU02433"/>
<dbReference type="VEuPathDB" id="FungiDB:NCU02433"/>
<dbReference type="HOGENOM" id="CLU_021259_5_1_1"/>
<dbReference type="InParanoid" id="Q7S3X7"/>
<dbReference type="OMA" id="TGFGCMI"/>
<dbReference type="OrthoDB" id="2960936at2759"/>
<dbReference type="Proteomes" id="UP000001805">
    <property type="component" value="Chromosome 7, Linkage Group VII"/>
</dbReference>
<dbReference type="GO" id="GO:0005737">
    <property type="term" value="C:cytoplasm"/>
    <property type="evidence" value="ECO:0000318"/>
    <property type="project" value="GO_Central"/>
</dbReference>
<dbReference type="GO" id="GO:0005634">
    <property type="term" value="C:nucleus"/>
    <property type="evidence" value="ECO:0007669"/>
    <property type="project" value="UniProtKB-SubCell"/>
</dbReference>
<dbReference type="GO" id="GO:0000407">
    <property type="term" value="C:phagophore assembly site"/>
    <property type="evidence" value="ECO:0007669"/>
    <property type="project" value="UniProtKB-SubCell"/>
</dbReference>
<dbReference type="GO" id="GO:0004197">
    <property type="term" value="F:cysteine-type endopeptidase activity"/>
    <property type="evidence" value="ECO:0000318"/>
    <property type="project" value="GO_Central"/>
</dbReference>
<dbReference type="GO" id="GO:0019786">
    <property type="term" value="F:protein-phosphatidylethanolamide deconjugating activity"/>
    <property type="evidence" value="ECO:0000318"/>
    <property type="project" value="GO_Central"/>
</dbReference>
<dbReference type="GO" id="GO:0035973">
    <property type="term" value="P:aggrephagy"/>
    <property type="evidence" value="ECO:0000318"/>
    <property type="project" value="GO_Central"/>
</dbReference>
<dbReference type="GO" id="GO:0000045">
    <property type="term" value="P:autophagosome assembly"/>
    <property type="evidence" value="ECO:0000318"/>
    <property type="project" value="GO_Central"/>
</dbReference>
<dbReference type="GO" id="GO:0000423">
    <property type="term" value="P:mitophagy"/>
    <property type="evidence" value="ECO:0000318"/>
    <property type="project" value="GO_Central"/>
</dbReference>
<dbReference type="GO" id="GO:0034727">
    <property type="term" value="P:piecemeal microautophagy of the nucleus"/>
    <property type="evidence" value="ECO:0000318"/>
    <property type="project" value="GO_Central"/>
</dbReference>
<dbReference type="GO" id="GO:0016485">
    <property type="term" value="P:protein processing"/>
    <property type="evidence" value="ECO:0000318"/>
    <property type="project" value="GO_Central"/>
</dbReference>
<dbReference type="GO" id="GO:0015031">
    <property type="term" value="P:protein transport"/>
    <property type="evidence" value="ECO:0007669"/>
    <property type="project" value="UniProtKB-KW"/>
</dbReference>
<dbReference type="InterPro" id="IPR038765">
    <property type="entry name" value="Papain-like_cys_pep_sf"/>
</dbReference>
<dbReference type="InterPro" id="IPR005078">
    <property type="entry name" value="Peptidase_C54"/>
</dbReference>
<dbReference type="InterPro" id="IPR046792">
    <property type="entry name" value="Peptidase_C54_cat"/>
</dbReference>
<dbReference type="PANTHER" id="PTHR22624:SF49">
    <property type="entry name" value="CYSTEINE PROTEASE"/>
    <property type="match status" value="1"/>
</dbReference>
<dbReference type="PANTHER" id="PTHR22624">
    <property type="entry name" value="CYSTEINE PROTEASE ATG4"/>
    <property type="match status" value="1"/>
</dbReference>
<dbReference type="Pfam" id="PF03416">
    <property type="entry name" value="Peptidase_C54"/>
    <property type="match status" value="1"/>
</dbReference>
<dbReference type="SUPFAM" id="SSF54001">
    <property type="entry name" value="Cysteine proteinases"/>
    <property type="match status" value="1"/>
</dbReference>
<sequence length="506" mass="55356">MTSSRPSGRDSTGWQETVSNTSPKLVNAMEAARAGAAEVGRVGRRFLYRIWDWEPVNNRTINEPVWCLGCSYTLDIKQYGSPLSSSSLSQLTADTPPLDKSQLAATHQHQDFNGVRTTATATCLSDTSMSAAPTGSQLGSFDTVPDSVTSGYDSALAYEEPGQDGGWPPAFLDDFESRIWMTYRTDFALIPRSSDPQASSALSFAMRIKTTFSDLTGFSSDTGWGCMIRSGQSLLANAILIARLGREWRRGTDLDAEKDIIALFADDPRAPYSLHNFVKYGATACGKYPGEWFGPSATARCIQALADEKQSGLRVYSTGDLPDVYEDSFMAVANPDGRGFQPTLILVCTRLGIDKINQVYEEALISTLQLPQSIGIAGGRPSSSHYFVGVQGQRLFYLDPHHPRPALPYREDPRGYTAEELDTCHTRRLRQLHIGDMDPSMLIGFLIKDEDDWDTWKSSVKHVQGKSIISVSPYDPARGQGGGRAEAIDEVETLESDDDGEPALGA</sequence>
<gene>
    <name type="primary">cpr-1</name>
    <name type="synonym">atg4</name>
    <name type="ORF">NCU02433</name>
</gene>
<feature type="chain" id="PRO_0000215865" description="Cysteine protease 1">
    <location>
        <begin position="1"/>
        <end position="506"/>
    </location>
</feature>
<feature type="region of interest" description="Disordered" evidence="3">
    <location>
        <begin position="1"/>
        <end position="21"/>
    </location>
</feature>
<feature type="active site" description="Nucleophile" evidence="2">
    <location>
        <position position="226"/>
    </location>
</feature>
<feature type="active site" evidence="2">
    <location>
        <position position="399"/>
    </location>
</feature>
<feature type="active site" evidence="2">
    <location>
        <position position="401"/>
    </location>
</feature>
<reference key="1">
    <citation type="journal article" date="2003" name="Nature">
        <title>The genome sequence of the filamentous fungus Neurospora crassa.</title>
        <authorList>
            <person name="Galagan J.E."/>
            <person name="Calvo S.E."/>
            <person name="Borkovich K.A."/>
            <person name="Selker E.U."/>
            <person name="Read N.D."/>
            <person name="Jaffe D.B."/>
            <person name="FitzHugh W."/>
            <person name="Ma L.-J."/>
            <person name="Smirnov S."/>
            <person name="Purcell S."/>
            <person name="Rehman B."/>
            <person name="Elkins T."/>
            <person name="Engels R."/>
            <person name="Wang S."/>
            <person name="Nielsen C.B."/>
            <person name="Butler J."/>
            <person name="Endrizzi M."/>
            <person name="Qui D."/>
            <person name="Ianakiev P."/>
            <person name="Bell-Pedersen D."/>
            <person name="Nelson M.A."/>
            <person name="Werner-Washburne M."/>
            <person name="Selitrennikoff C.P."/>
            <person name="Kinsey J.A."/>
            <person name="Braun E.L."/>
            <person name="Zelter A."/>
            <person name="Schulte U."/>
            <person name="Kothe G.O."/>
            <person name="Jedd G."/>
            <person name="Mewes H.-W."/>
            <person name="Staben C."/>
            <person name="Marcotte E."/>
            <person name="Greenberg D."/>
            <person name="Roy A."/>
            <person name="Foley K."/>
            <person name="Naylor J."/>
            <person name="Stange-Thomann N."/>
            <person name="Barrett R."/>
            <person name="Gnerre S."/>
            <person name="Kamal M."/>
            <person name="Kamvysselis M."/>
            <person name="Mauceli E.W."/>
            <person name="Bielke C."/>
            <person name="Rudd S."/>
            <person name="Frishman D."/>
            <person name="Krystofova S."/>
            <person name="Rasmussen C."/>
            <person name="Metzenberg R.L."/>
            <person name="Perkins D.D."/>
            <person name="Kroken S."/>
            <person name="Cogoni C."/>
            <person name="Macino G."/>
            <person name="Catcheside D.E.A."/>
            <person name="Li W."/>
            <person name="Pratt R.J."/>
            <person name="Osmani S.A."/>
            <person name="DeSouza C.P.C."/>
            <person name="Glass N.L."/>
            <person name="Orbach M.J."/>
            <person name="Berglund J.A."/>
            <person name="Voelker R."/>
            <person name="Yarden O."/>
            <person name="Plamann M."/>
            <person name="Seiler S."/>
            <person name="Dunlap J.C."/>
            <person name="Radford A."/>
            <person name="Aramayo R."/>
            <person name="Natvig D.O."/>
            <person name="Alex L.A."/>
            <person name="Mannhaupt G."/>
            <person name="Ebbole D.J."/>
            <person name="Freitag M."/>
            <person name="Paulsen I."/>
            <person name="Sachs M.S."/>
            <person name="Lander E.S."/>
            <person name="Nusbaum C."/>
            <person name="Birren B.W."/>
        </authorList>
    </citation>
    <scope>NUCLEOTIDE SEQUENCE [LARGE SCALE GENOMIC DNA]</scope>
    <source>
        <strain>ATCC 24698 / 74-OR23-1A / CBS 708.71 / DSM 1257 / FGSC 987</strain>
    </source>
</reference>
<proteinExistence type="inferred from homology"/>
<keyword id="KW-0072">Autophagy</keyword>
<keyword id="KW-0963">Cytoplasm</keyword>
<keyword id="KW-0378">Hydrolase</keyword>
<keyword id="KW-0539">Nucleus</keyword>
<keyword id="KW-0645">Protease</keyword>
<keyword id="KW-0653">Protein transport</keyword>
<keyword id="KW-1185">Reference proteome</keyword>
<keyword id="KW-0788">Thiol protease</keyword>
<keyword id="KW-0813">Transport</keyword>
<comment type="function">
    <text evidence="1">Cysteine protease that plays a key role in cytoplasm to vacuole transport (Cvt) and autophagy by mediating both proteolytic activation and delipidation of ATG8. Required for selective autophagic degradation of the nucleus (nucleophagy) as well as for mitophagy which contributes to regulate mitochondrial quantity and quality by eliminating the mitochondria to a basal level to fulfill cellular energy requirements and preventing excess ROS production. The protease activity is required for proteolytic activation of ATG8: cleaves the C-terminal amino acid of ATG8 to reveal a C-terminal glycine. ATG8 ubiquitin-like activity requires the exposure of the glycine at the C-terminus for its conjugation to phosphatidylethanolamine (PE) and its insertion to membranes, which is necessary for autophagy. The ATG8-PE conjugate mediates tethering between adjacent membranes and stimulates membrane hemifusion, leading to expansion of the autophagosomal membrane during autophagy. In addition to the protease activity, also catalyzes deconjugation of PE-conjugated forms of ATG8 during macroautophagy: ATG8 delipidation is required to release the protein from membranes, which facilitates multiple events during macroautophagy, and especially for efficient autophagosome biogenesis, the assembly of ATG9-containing tubulovesicular clusters into phagophores/autophagosomes, and for the disassembly of PAS-associated ATG components. ATG8 delipidation by ATG4 also recycles ATG8-PE generated on inappropriate membranes to maintain a reservoir of unlipidated ATG8 that is required for autophagosome formation at the PAS.</text>
</comment>
<comment type="catalytic activity">
    <reaction evidence="1">
        <text>[protein]-C-terminal L-amino acid-glycyl-phosphatidylethanolamide + H2O = [protein]-C-terminal L-amino acid-glycine + a 1,2-diacyl-sn-glycero-3-phosphoethanolamine</text>
        <dbReference type="Rhea" id="RHEA:67548"/>
        <dbReference type="Rhea" id="RHEA-COMP:17323"/>
        <dbReference type="Rhea" id="RHEA-COMP:17324"/>
        <dbReference type="ChEBI" id="CHEBI:15377"/>
        <dbReference type="ChEBI" id="CHEBI:64612"/>
        <dbReference type="ChEBI" id="CHEBI:172940"/>
        <dbReference type="ChEBI" id="CHEBI:172941"/>
    </reaction>
    <physiologicalReaction direction="left-to-right" evidence="1">
        <dbReference type="Rhea" id="RHEA:67549"/>
    </physiologicalReaction>
</comment>
<comment type="subcellular location">
    <subcellularLocation>
        <location evidence="1">Cytoplasm</location>
    </subcellularLocation>
    <subcellularLocation>
        <location evidence="1">Nucleus</location>
    </subcellularLocation>
    <subcellularLocation>
        <location evidence="1">Preautophagosomal structure</location>
    </subcellularLocation>
</comment>
<comment type="similarity">
    <text evidence="4">Belongs to the peptidase C54 family.</text>
</comment>